<feature type="chain" id="PRO_1000093683" description="Thiamine-phosphate synthase">
    <location>
        <begin position="1"/>
        <end position="211"/>
    </location>
</feature>
<feature type="binding site" evidence="1">
    <location>
        <begin position="37"/>
        <end position="41"/>
    </location>
    <ligand>
        <name>4-amino-2-methyl-5-(diphosphooxymethyl)pyrimidine</name>
        <dbReference type="ChEBI" id="CHEBI:57841"/>
    </ligand>
</feature>
<feature type="binding site" evidence="1">
    <location>
        <position position="69"/>
    </location>
    <ligand>
        <name>4-amino-2-methyl-5-(diphosphooxymethyl)pyrimidine</name>
        <dbReference type="ChEBI" id="CHEBI:57841"/>
    </ligand>
</feature>
<feature type="binding site" evidence="1">
    <location>
        <position position="70"/>
    </location>
    <ligand>
        <name>Mg(2+)</name>
        <dbReference type="ChEBI" id="CHEBI:18420"/>
    </ligand>
</feature>
<feature type="binding site" evidence="1">
    <location>
        <position position="89"/>
    </location>
    <ligand>
        <name>Mg(2+)</name>
        <dbReference type="ChEBI" id="CHEBI:18420"/>
    </ligand>
</feature>
<feature type="binding site" evidence="1">
    <location>
        <position position="108"/>
    </location>
    <ligand>
        <name>4-amino-2-methyl-5-(diphosphooxymethyl)pyrimidine</name>
        <dbReference type="ChEBI" id="CHEBI:57841"/>
    </ligand>
</feature>
<feature type="binding site" evidence="1">
    <location>
        <begin position="134"/>
        <end position="136"/>
    </location>
    <ligand>
        <name>2-[(2R,5Z)-2-carboxy-4-methylthiazol-5(2H)-ylidene]ethyl phosphate</name>
        <dbReference type="ChEBI" id="CHEBI:62899"/>
    </ligand>
</feature>
<feature type="binding site" evidence="1">
    <location>
        <position position="137"/>
    </location>
    <ligand>
        <name>4-amino-2-methyl-5-(diphosphooxymethyl)pyrimidine</name>
        <dbReference type="ChEBI" id="CHEBI:57841"/>
    </ligand>
</feature>
<feature type="binding site" evidence="1">
    <location>
        <position position="166"/>
    </location>
    <ligand>
        <name>2-[(2R,5Z)-2-carboxy-4-methylthiazol-5(2H)-ylidene]ethyl phosphate</name>
        <dbReference type="ChEBI" id="CHEBI:62899"/>
    </ligand>
</feature>
<feature type="binding site" evidence="1">
    <location>
        <begin position="186"/>
        <end position="187"/>
    </location>
    <ligand>
        <name>2-[(2R,5Z)-2-carboxy-4-methylthiazol-5(2H)-ylidene]ethyl phosphate</name>
        <dbReference type="ChEBI" id="CHEBI:62899"/>
    </ligand>
</feature>
<reference key="1">
    <citation type="journal article" date="2011" name="J. Bacteriol.">
        <title>Comparative genomics of 28 Salmonella enterica isolates: evidence for CRISPR-mediated adaptive sublineage evolution.</title>
        <authorList>
            <person name="Fricke W.F."/>
            <person name="Mammel M.K."/>
            <person name="McDermott P.F."/>
            <person name="Tartera C."/>
            <person name="White D.G."/>
            <person name="Leclerc J.E."/>
            <person name="Ravel J."/>
            <person name="Cebula T.A."/>
        </authorList>
    </citation>
    <scope>NUCLEOTIDE SEQUENCE [LARGE SCALE GENOMIC DNA]</scope>
    <source>
        <strain>SL483</strain>
    </source>
</reference>
<sequence length="211" mass="22925">MYQPDFPTVPFRLGLYPVVDSVAWIERLLEAGVRTIQLRIKDKRDEEVESDVIAAIALGRRYDARLFINDYWRLAIKHRAYGVHLGQEDLETTDLKAIQAAGLRLGVSTHDDMEIDIALAAKPSYIALGHVFPTQTKQMPSAPQGLAQLASHIERLADYPTVAIGGISLERAPAVLATGVGSVAVVSAITQAADWREATAQLLAIAGVGDE</sequence>
<comment type="function">
    <text evidence="1">Condenses 4-methyl-5-(beta-hydroxyethyl)thiazole monophosphate (THZ-P) and 2-methyl-4-amino-5-hydroxymethyl pyrimidine pyrophosphate (HMP-PP) to form thiamine monophosphate (TMP).</text>
</comment>
<comment type="catalytic activity">
    <reaction evidence="1">
        <text>2-[(2R,5Z)-2-carboxy-4-methylthiazol-5(2H)-ylidene]ethyl phosphate + 4-amino-2-methyl-5-(diphosphooxymethyl)pyrimidine + 2 H(+) = thiamine phosphate + CO2 + diphosphate</text>
        <dbReference type="Rhea" id="RHEA:47844"/>
        <dbReference type="ChEBI" id="CHEBI:15378"/>
        <dbReference type="ChEBI" id="CHEBI:16526"/>
        <dbReference type="ChEBI" id="CHEBI:33019"/>
        <dbReference type="ChEBI" id="CHEBI:37575"/>
        <dbReference type="ChEBI" id="CHEBI:57841"/>
        <dbReference type="ChEBI" id="CHEBI:62899"/>
        <dbReference type="EC" id="2.5.1.3"/>
    </reaction>
</comment>
<comment type="catalytic activity">
    <reaction evidence="1">
        <text>2-(2-carboxy-4-methylthiazol-5-yl)ethyl phosphate + 4-amino-2-methyl-5-(diphosphooxymethyl)pyrimidine + 2 H(+) = thiamine phosphate + CO2 + diphosphate</text>
        <dbReference type="Rhea" id="RHEA:47848"/>
        <dbReference type="ChEBI" id="CHEBI:15378"/>
        <dbReference type="ChEBI" id="CHEBI:16526"/>
        <dbReference type="ChEBI" id="CHEBI:33019"/>
        <dbReference type="ChEBI" id="CHEBI:37575"/>
        <dbReference type="ChEBI" id="CHEBI:57841"/>
        <dbReference type="ChEBI" id="CHEBI:62890"/>
        <dbReference type="EC" id="2.5.1.3"/>
    </reaction>
</comment>
<comment type="catalytic activity">
    <reaction evidence="1">
        <text>4-methyl-5-(2-phosphooxyethyl)-thiazole + 4-amino-2-methyl-5-(diphosphooxymethyl)pyrimidine + H(+) = thiamine phosphate + diphosphate</text>
        <dbReference type="Rhea" id="RHEA:22328"/>
        <dbReference type="ChEBI" id="CHEBI:15378"/>
        <dbReference type="ChEBI" id="CHEBI:33019"/>
        <dbReference type="ChEBI" id="CHEBI:37575"/>
        <dbReference type="ChEBI" id="CHEBI:57841"/>
        <dbReference type="ChEBI" id="CHEBI:58296"/>
        <dbReference type="EC" id="2.5.1.3"/>
    </reaction>
</comment>
<comment type="cofactor">
    <cofactor evidence="1">
        <name>Mg(2+)</name>
        <dbReference type="ChEBI" id="CHEBI:18420"/>
    </cofactor>
    <text evidence="1">Binds 1 Mg(2+) ion per subunit.</text>
</comment>
<comment type="pathway">
    <text evidence="1">Cofactor biosynthesis; thiamine diphosphate biosynthesis; thiamine phosphate from 4-amino-2-methyl-5-diphosphomethylpyrimidine and 4-methyl-5-(2-phosphoethyl)-thiazole: step 1/1.</text>
</comment>
<comment type="similarity">
    <text evidence="1">Belongs to the thiamine-phosphate synthase family.</text>
</comment>
<name>THIE_SALA4</name>
<dbReference type="EC" id="2.5.1.3" evidence="1"/>
<dbReference type="EMBL" id="CP001138">
    <property type="protein sequence ID" value="ACH50920.1"/>
    <property type="molecule type" value="Genomic_DNA"/>
</dbReference>
<dbReference type="RefSeq" id="WP_000284642.1">
    <property type="nucleotide sequence ID" value="NC_011149.1"/>
</dbReference>
<dbReference type="SMR" id="B5F1H6"/>
<dbReference type="KEGG" id="sea:SeAg_B4406"/>
<dbReference type="HOGENOM" id="CLU_018272_3_3_6"/>
<dbReference type="UniPathway" id="UPA00060">
    <property type="reaction ID" value="UER00141"/>
</dbReference>
<dbReference type="Proteomes" id="UP000008819">
    <property type="component" value="Chromosome"/>
</dbReference>
<dbReference type="GO" id="GO:0005737">
    <property type="term" value="C:cytoplasm"/>
    <property type="evidence" value="ECO:0007669"/>
    <property type="project" value="TreeGrafter"/>
</dbReference>
<dbReference type="GO" id="GO:0000287">
    <property type="term" value="F:magnesium ion binding"/>
    <property type="evidence" value="ECO:0007669"/>
    <property type="project" value="UniProtKB-UniRule"/>
</dbReference>
<dbReference type="GO" id="GO:0004789">
    <property type="term" value="F:thiamine-phosphate diphosphorylase activity"/>
    <property type="evidence" value="ECO:0007669"/>
    <property type="project" value="UniProtKB-UniRule"/>
</dbReference>
<dbReference type="GO" id="GO:0009228">
    <property type="term" value="P:thiamine biosynthetic process"/>
    <property type="evidence" value="ECO:0007669"/>
    <property type="project" value="UniProtKB-KW"/>
</dbReference>
<dbReference type="GO" id="GO:0009229">
    <property type="term" value="P:thiamine diphosphate biosynthetic process"/>
    <property type="evidence" value="ECO:0007669"/>
    <property type="project" value="UniProtKB-UniRule"/>
</dbReference>
<dbReference type="CDD" id="cd00564">
    <property type="entry name" value="TMP_TenI"/>
    <property type="match status" value="1"/>
</dbReference>
<dbReference type="FunFam" id="3.20.20.70:FF:000064">
    <property type="entry name" value="Thiamine-phosphate synthase"/>
    <property type="match status" value="1"/>
</dbReference>
<dbReference type="Gene3D" id="3.20.20.70">
    <property type="entry name" value="Aldolase class I"/>
    <property type="match status" value="1"/>
</dbReference>
<dbReference type="HAMAP" id="MF_00097">
    <property type="entry name" value="TMP_synthase"/>
    <property type="match status" value="1"/>
</dbReference>
<dbReference type="InterPro" id="IPR013785">
    <property type="entry name" value="Aldolase_TIM"/>
</dbReference>
<dbReference type="InterPro" id="IPR036206">
    <property type="entry name" value="ThiamineP_synth_sf"/>
</dbReference>
<dbReference type="InterPro" id="IPR022998">
    <property type="entry name" value="ThiamineP_synth_TenI"/>
</dbReference>
<dbReference type="InterPro" id="IPR034291">
    <property type="entry name" value="TMP_synthase"/>
</dbReference>
<dbReference type="NCBIfam" id="NF002904">
    <property type="entry name" value="PRK03512.1"/>
    <property type="match status" value="1"/>
</dbReference>
<dbReference type="NCBIfam" id="TIGR00693">
    <property type="entry name" value="thiE"/>
    <property type="match status" value="1"/>
</dbReference>
<dbReference type="PANTHER" id="PTHR20857">
    <property type="entry name" value="THIAMINE-PHOSPHATE PYROPHOSPHORYLASE"/>
    <property type="match status" value="1"/>
</dbReference>
<dbReference type="PANTHER" id="PTHR20857:SF15">
    <property type="entry name" value="THIAMINE-PHOSPHATE SYNTHASE"/>
    <property type="match status" value="1"/>
</dbReference>
<dbReference type="Pfam" id="PF02581">
    <property type="entry name" value="TMP-TENI"/>
    <property type="match status" value="1"/>
</dbReference>
<dbReference type="SUPFAM" id="SSF51391">
    <property type="entry name" value="Thiamin phosphate synthase"/>
    <property type="match status" value="1"/>
</dbReference>
<keyword id="KW-0460">Magnesium</keyword>
<keyword id="KW-0479">Metal-binding</keyword>
<keyword id="KW-0784">Thiamine biosynthesis</keyword>
<keyword id="KW-0808">Transferase</keyword>
<organism>
    <name type="scientific">Salmonella agona (strain SL483)</name>
    <dbReference type="NCBI Taxonomy" id="454166"/>
    <lineage>
        <taxon>Bacteria</taxon>
        <taxon>Pseudomonadati</taxon>
        <taxon>Pseudomonadota</taxon>
        <taxon>Gammaproteobacteria</taxon>
        <taxon>Enterobacterales</taxon>
        <taxon>Enterobacteriaceae</taxon>
        <taxon>Salmonella</taxon>
    </lineage>
</organism>
<evidence type="ECO:0000255" key="1">
    <source>
        <dbReference type="HAMAP-Rule" id="MF_00097"/>
    </source>
</evidence>
<gene>
    <name evidence="1" type="primary">thiE</name>
    <name type="ordered locus">SeAg_B4406</name>
</gene>
<proteinExistence type="inferred from homology"/>
<protein>
    <recommendedName>
        <fullName evidence="1">Thiamine-phosphate synthase</fullName>
        <shortName evidence="1">TP synthase</shortName>
        <shortName evidence="1">TPS</shortName>
        <ecNumber evidence="1">2.5.1.3</ecNumber>
    </recommendedName>
    <alternativeName>
        <fullName evidence="1">Thiamine-phosphate pyrophosphorylase</fullName>
        <shortName evidence="1">TMP pyrophosphorylase</shortName>
        <shortName evidence="1">TMP-PPase</shortName>
    </alternativeName>
</protein>
<accession>B5F1H6</accession>